<dbReference type="EC" id="7.3.2.2" evidence="1"/>
<dbReference type="EMBL" id="BA000028">
    <property type="protein sequence ID" value="BAC12557.1"/>
    <property type="molecule type" value="Genomic_DNA"/>
</dbReference>
<dbReference type="RefSeq" id="WP_011065005.1">
    <property type="nucleotide sequence ID" value="NC_004193.1"/>
</dbReference>
<dbReference type="SMR" id="Q8ESM5"/>
<dbReference type="STRING" id="221109.gene:10732805"/>
<dbReference type="KEGG" id="oih:OB0601"/>
<dbReference type="eggNOG" id="COG3638">
    <property type="taxonomic scope" value="Bacteria"/>
</dbReference>
<dbReference type="HOGENOM" id="CLU_000604_1_22_9"/>
<dbReference type="OrthoDB" id="9802264at2"/>
<dbReference type="PhylomeDB" id="Q8ESM5"/>
<dbReference type="Proteomes" id="UP000000822">
    <property type="component" value="Chromosome"/>
</dbReference>
<dbReference type="GO" id="GO:0005886">
    <property type="term" value="C:plasma membrane"/>
    <property type="evidence" value="ECO:0007669"/>
    <property type="project" value="UniProtKB-SubCell"/>
</dbReference>
<dbReference type="GO" id="GO:0015416">
    <property type="term" value="F:ABC-type phosphonate transporter activity"/>
    <property type="evidence" value="ECO:0007669"/>
    <property type="project" value="UniProtKB-EC"/>
</dbReference>
<dbReference type="GO" id="GO:0005524">
    <property type="term" value="F:ATP binding"/>
    <property type="evidence" value="ECO:0007669"/>
    <property type="project" value="UniProtKB-KW"/>
</dbReference>
<dbReference type="GO" id="GO:0016887">
    <property type="term" value="F:ATP hydrolysis activity"/>
    <property type="evidence" value="ECO:0007669"/>
    <property type="project" value="InterPro"/>
</dbReference>
<dbReference type="CDD" id="cd03256">
    <property type="entry name" value="ABC_PhnC_transporter"/>
    <property type="match status" value="1"/>
</dbReference>
<dbReference type="Gene3D" id="3.40.50.300">
    <property type="entry name" value="P-loop containing nucleotide triphosphate hydrolases"/>
    <property type="match status" value="1"/>
</dbReference>
<dbReference type="InterPro" id="IPR003593">
    <property type="entry name" value="AAA+_ATPase"/>
</dbReference>
<dbReference type="InterPro" id="IPR003439">
    <property type="entry name" value="ABC_transporter-like_ATP-bd"/>
</dbReference>
<dbReference type="InterPro" id="IPR017871">
    <property type="entry name" value="ABC_transporter-like_CS"/>
</dbReference>
<dbReference type="InterPro" id="IPR012693">
    <property type="entry name" value="ABC_transpr_PhnC"/>
</dbReference>
<dbReference type="InterPro" id="IPR050086">
    <property type="entry name" value="MetN_ABC_transporter-like"/>
</dbReference>
<dbReference type="InterPro" id="IPR027417">
    <property type="entry name" value="P-loop_NTPase"/>
</dbReference>
<dbReference type="NCBIfam" id="TIGR02315">
    <property type="entry name" value="ABC_phnC"/>
    <property type="match status" value="1"/>
</dbReference>
<dbReference type="PANTHER" id="PTHR43166">
    <property type="entry name" value="AMINO ACID IMPORT ATP-BINDING PROTEIN"/>
    <property type="match status" value="1"/>
</dbReference>
<dbReference type="PANTHER" id="PTHR43166:SF6">
    <property type="entry name" value="PHOSPHONATES IMPORT ATP-BINDING PROTEIN PHNC"/>
    <property type="match status" value="1"/>
</dbReference>
<dbReference type="Pfam" id="PF00005">
    <property type="entry name" value="ABC_tran"/>
    <property type="match status" value="1"/>
</dbReference>
<dbReference type="SMART" id="SM00382">
    <property type="entry name" value="AAA"/>
    <property type="match status" value="1"/>
</dbReference>
<dbReference type="SUPFAM" id="SSF52540">
    <property type="entry name" value="P-loop containing nucleoside triphosphate hydrolases"/>
    <property type="match status" value="1"/>
</dbReference>
<dbReference type="PROSITE" id="PS00211">
    <property type="entry name" value="ABC_TRANSPORTER_1"/>
    <property type="match status" value="1"/>
</dbReference>
<dbReference type="PROSITE" id="PS50893">
    <property type="entry name" value="ABC_TRANSPORTER_2"/>
    <property type="match status" value="1"/>
</dbReference>
<dbReference type="PROSITE" id="PS51249">
    <property type="entry name" value="PHNC"/>
    <property type="match status" value="1"/>
</dbReference>
<gene>
    <name evidence="1" type="primary">phnC1</name>
    <name type="ordered locus">OB0601</name>
</gene>
<feature type="chain" id="PRO_0000092716" description="Phosphonates import ATP-binding protein PhnC 1">
    <location>
        <begin position="1"/>
        <end position="258"/>
    </location>
</feature>
<feature type="domain" description="ABC transporter" evidence="1">
    <location>
        <begin position="2"/>
        <end position="246"/>
    </location>
</feature>
<feature type="binding site" evidence="1">
    <location>
        <begin position="35"/>
        <end position="42"/>
    </location>
    <ligand>
        <name>ATP</name>
        <dbReference type="ChEBI" id="CHEBI:30616"/>
    </ligand>
</feature>
<sequence length="258" mass="28949">MIEFKDVGLVYPNGTEGLKNINVKINDGEFVVIVGLSGAGKSTFIRSINRLVTPTTGELIIDDENILNYSGNKLRMLRTKTGMIFQNYNLVKRSNVFKNVLAGRLGHTGTIRSIFNQYKKEDVALAYESLHRVNIAEKIYNRADELSGGQQQRVSIARVLTQQPKYILADEPVASLDPPTSHQVMTYLKKINREDKITTIVNLHFIDMAMEYADRIIGMRAGEVVFDGPVSEVSESTFEEIYGRSIREDDLRGGAKES</sequence>
<keyword id="KW-0067">ATP-binding</keyword>
<keyword id="KW-1003">Cell membrane</keyword>
<keyword id="KW-0472">Membrane</keyword>
<keyword id="KW-0547">Nucleotide-binding</keyword>
<keyword id="KW-0918">Phosphonate transport</keyword>
<keyword id="KW-1185">Reference proteome</keyword>
<keyword id="KW-1278">Translocase</keyword>
<keyword id="KW-0813">Transport</keyword>
<protein>
    <recommendedName>
        <fullName evidence="1">Phosphonates import ATP-binding protein PhnC 1</fullName>
        <ecNumber evidence="1">7.3.2.2</ecNumber>
    </recommendedName>
</protein>
<name>PHNC1_OCEIH</name>
<accession>Q8ESM5</accession>
<comment type="function">
    <text evidence="1">Part of the ABC transporter complex PhnCDE involved in phosphonates import. Responsible for energy coupling to the transport system.</text>
</comment>
<comment type="catalytic activity">
    <reaction evidence="1">
        <text>phosphonate(out) + ATP + H2O = phosphonate(in) + ADP + phosphate + H(+)</text>
        <dbReference type="Rhea" id="RHEA:18065"/>
        <dbReference type="ChEBI" id="CHEBI:15377"/>
        <dbReference type="ChEBI" id="CHEBI:15378"/>
        <dbReference type="ChEBI" id="CHEBI:16215"/>
        <dbReference type="ChEBI" id="CHEBI:30616"/>
        <dbReference type="ChEBI" id="CHEBI:43474"/>
        <dbReference type="ChEBI" id="CHEBI:456216"/>
        <dbReference type="EC" id="7.3.2.2"/>
    </reaction>
</comment>
<comment type="subunit">
    <text evidence="1">The complex is composed of two ATP-binding proteins (PhnC), two transmembrane proteins (PhnE) and a solute-binding protein (PhnD).</text>
</comment>
<comment type="subcellular location">
    <subcellularLocation>
        <location evidence="1">Cell membrane</location>
        <topology evidence="1">Peripheral membrane protein</topology>
    </subcellularLocation>
</comment>
<comment type="similarity">
    <text evidence="1">Belongs to the ABC transporter superfamily. Phosphonates importer (TC 3.A.1.9.1) family.</text>
</comment>
<evidence type="ECO:0000255" key="1">
    <source>
        <dbReference type="HAMAP-Rule" id="MF_01713"/>
    </source>
</evidence>
<proteinExistence type="inferred from homology"/>
<reference key="1">
    <citation type="journal article" date="2002" name="Nucleic Acids Res.">
        <title>Genome sequence of Oceanobacillus iheyensis isolated from the Iheya Ridge and its unexpected adaptive capabilities to extreme environments.</title>
        <authorList>
            <person name="Takami H."/>
            <person name="Takaki Y."/>
            <person name="Uchiyama I."/>
        </authorList>
    </citation>
    <scope>NUCLEOTIDE SEQUENCE [LARGE SCALE GENOMIC DNA]</scope>
    <source>
        <strain>DSM 14371 / CIP 107618 / JCM 11309 / KCTC 3954 / HTE831</strain>
    </source>
</reference>
<organism>
    <name type="scientific">Oceanobacillus iheyensis (strain DSM 14371 / CIP 107618 / JCM 11309 / KCTC 3954 / HTE831)</name>
    <dbReference type="NCBI Taxonomy" id="221109"/>
    <lineage>
        <taxon>Bacteria</taxon>
        <taxon>Bacillati</taxon>
        <taxon>Bacillota</taxon>
        <taxon>Bacilli</taxon>
        <taxon>Bacillales</taxon>
        <taxon>Bacillaceae</taxon>
        <taxon>Oceanobacillus</taxon>
    </lineage>
</organism>